<sequence length="317" mass="33998">MYTKILGTGSYLPTQIRSNTDLANMVDTSDEWIIARTGIRERRIASANETVFSMGSSAAEQALHMAGISANKVGMIIVATTSSSHAFPSSACQIQRDLGIMDCVAFDLAAACAGFPYALSIVDQYIKNGVIEYALVIGSDVLSNTPAPDDRSTLILFGDGAGAVLVGCSEQPGILSTHLHADGSYSDLLTLPYYNRFNPTADIYLKMSGNEVFKIAVTKLAHLVDETMSINHLSSKEIDWLVPHQANLRIISATAKLLGMKMNKVIVTLDKHGNTSAASIPLALDEAVRDGRIKTDQLLLLEAFGGGLTWGSALLRF</sequence>
<reference key="1">
    <citation type="journal article" date="2006" name="PLoS Biol.">
        <title>Metabolic complementarity and genomics of the dual bacterial symbiosis of sharpshooters.</title>
        <authorList>
            <person name="Wu D."/>
            <person name="Daugherty S.C."/>
            <person name="Van Aken S.E."/>
            <person name="Pai G.H."/>
            <person name="Watkins K.L."/>
            <person name="Khouri H."/>
            <person name="Tallon L.J."/>
            <person name="Zaborsky J.M."/>
            <person name="Dunbar H.E."/>
            <person name="Tran P.L."/>
            <person name="Moran N.A."/>
            <person name="Eisen J.A."/>
        </authorList>
    </citation>
    <scope>NUCLEOTIDE SEQUENCE [LARGE SCALE GENOMIC DNA]</scope>
</reference>
<protein>
    <recommendedName>
        <fullName evidence="1">Beta-ketoacyl-[acyl-carrier-protein] synthase III</fullName>
        <shortName evidence="1">Beta-ketoacyl-ACP synthase III</shortName>
        <shortName evidence="1">KAS III</shortName>
        <ecNumber evidence="1">2.3.1.180</ecNumber>
    </recommendedName>
    <alternativeName>
        <fullName evidence="1">3-oxoacyl-[acyl-carrier-protein] synthase 3</fullName>
    </alternativeName>
    <alternativeName>
        <fullName evidence="1">3-oxoacyl-[acyl-carrier-protein] synthase III</fullName>
    </alternativeName>
</protein>
<dbReference type="EC" id="2.3.1.180" evidence="1"/>
<dbReference type="EMBL" id="CP000238">
    <property type="protein sequence ID" value="ABF14152.1"/>
    <property type="molecule type" value="Genomic_DNA"/>
</dbReference>
<dbReference type="RefSeq" id="WP_011520610.1">
    <property type="nucleotide sequence ID" value="NC_007984.1"/>
</dbReference>
<dbReference type="SMR" id="Q1LT37"/>
<dbReference type="STRING" id="374463.BCI_0436"/>
<dbReference type="KEGG" id="bci:BCI_0436"/>
<dbReference type="HOGENOM" id="CLU_039592_3_1_6"/>
<dbReference type="OrthoDB" id="9815506at2"/>
<dbReference type="UniPathway" id="UPA00094"/>
<dbReference type="Proteomes" id="UP000002427">
    <property type="component" value="Chromosome"/>
</dbReference>
<dbReference type="GO" id="GO:0005737">
    <property type="term" value="C:cytoplasm"/>
    <property type="evidence" value="ECO:0007669"/>
    <property type="project" value="UniProtKB-SubCell"/>
</dbReference>
<dbReference type="GO" id="GO:0004315">
    <property type="term" value="F:3-oxoacyl-[acyl-carrier-protein] synthase activity"/>
    <property type="evidence" value="ECO:0007669"/>
    <property type="project" value="InterPro"/>
</dbReference>
<dbReference type="GO" id="GO:0033818">
    <property type="term" value="F:beta-ketoacyl-acyl-carrier-protein synthase III activity"/>
    <property type="evidence" value="ECO:0007669"/>
    <property type="project" value="UniProtKB-UniRule"/>
</dbReference>
<dbReference type="GO" id="GO:0006633">
    <property type="term" value="P:fatty acid biosynthetic process"/>
    <property type="evidence" value="ECO:0007669"/>
    <property type="project" value="UniProtKB-UniRule"/>
</dbReference>
<dbReference type="CDD" id="cd00830">
    <property type="entry name" value="KAS_III"/>
    <property type="match status" value="1"/>
</dbReference>
<dbReference type="FunFam" id="3.40.47.10:FF:000004">
    <property type="entry name" value="3-oxoacyl-[acyl-carrier-protein] synthase 3"/>
    <property type="match status" value="1"/>
</dbReference>
<dbReference type="Gene3D" id="3.40.47.10">
    <property type="match status" value="1"/>
</dbReference>
<dbReference type="HAMAP" id="MF_01815">
    <property type="entry name" value="FabH"/>
    <property type="match status" value="1"/>
</dbReference>
<dbReference type="InterPro" id="IPR013747">
    <property type="entry name" value="ACP_syn_III_C"/>
</dbReference>
<dbReference type="InterPro" id="IPR013751">
    <property type="entry name" value="ACP_syn_III_N"/>
</dbReference>
<dbReference type="InterPro" id="IPR004655">
    <property type="entry name" value="FabH"/>
</dbReference>
<dbReference type="InterPro" id="IPR016039">
    <property type="entry name" value="Thiolase-like"/>
</dbReference>
<dbReference type="NCBIfam" id="TIGR00747">
    <property type="entry name" value="fabH"/>
    <property type="match status" value="1"/>
</dbReference>
<dbReference type="NCBIfam" id="NF006829">
    <property type="entry name" value="PRK09352.1"/>
    <property type="match status" value="1"/>
</dbReference>
<dbReference type="PANTHER" id="PTHR43091">
    <property type="entry name" value="3-OXOACYL-[ACYL-CARRIER-PROTEIN] SYNTHASE"/>
    <property type="match status" value="1"/>
</dbReference>
<dbReference type="PANTHER" id="PTHR43091:SF1">
    <property type="entry name" value="BETA-KETOACYL-[ACYL-CARRIER-PROTEIN] SYNTHASE III, CHLOROPLASTIC"/>
    <property type="match status" value="1"/>
</dbReference>
<dbReference type="Pfam" id="PF08545">
    <property type="entry name" value="ACP_syn_III"/>
    <property type="match status" value="1"/>
</dbReference>
<dbReference type="Pfam" id="PF08541">
    <property type="entry name" value="ACP_syn_III_C"/>
    <property type="match status" value="1"/>
</dbReference>
<dbReference type="SUPFAM" id="SSF53901">
    <property type="entry name" value="Thiolase-like"/>
    <property type="match status" value="1"/>
</dbReference>
<evidence type="ECO:0000255" key="1">
    <source>
        <dbReference type="HAMAP-Rule" id="MF_01815"/>
    </source>
</evidence>
<gene>
    <name evidence="1" type="primary">fabH</name>
    <name type="ordered locus">BCI_0436</name>
</gene>
<organism>
    <name type="scientific">Baumannia cicadellinicola subsp. Homalodisca coagulata</name>
    <dbReference type="NCBI Taxonomy" id="374463"/>
    <lineage>
        <taxon>Bacteria</taxon>
        <taxon>Pseudomonadati</taxon>
        <taxon>Pseudomonadota</taxon>
        <taxon>Gammaproteobacteria</taxon>
        <taxon>Candidatus Palibaumannia</taxon>
    </lineage>
</organism>
<keyword id="KW-0012">Acyltransferase</keyword>
<keyword id="KW-0963">Cytoplasm</keyword>
<keyword id="KW-0275">Fatty acid biosynthesis</keyword>
<keyword id="KW-0276">Fatty acid metabolism</keyword>
<keyword id="KW-0444">Lipid biosynthesis</keyword>
<keyword id="KW-0443">Lipid metabolism</keyword>
<keyword id="KW-0511">Multifunctional enzyme</keyword>
<keyword id="KW-1185">Reference proteome</keyword>
<keyword id="KW-0808">Transferase</keyword>
<comment type="function">
    <text evidence="1">Catalyzes the condensation reaction of fatty acid synthesis by the addition to an acyl acceptor of two carbons from malonyl-ACP. Catalyzes the first condensation reaction which initiates fatty acid synthesis and may therefore play a role in governing the total rate of fatty acid production. Possesses both acetoacetyl-ACP synthase and acetyl transacylase activities. Its substrate specificity determines the biosynthesis of branched-chain and/or straight-chain of fatty acids.</text>
</comment>
<comment type="catalytic activity">
    <reaction evidence="1">
        <text>malonyl-[ACP] + acetyl-CoA + H(+) = 3-oxobutanoyl-[ACP] + CO2 + CoA</text>
        <dbReference type="Rhea" id="RHEA:12080"/>
        <dbReference type="Rhea" id="RHEA-COMP:9623"/>
        <dbReference type="Rhea" id="RHEA-COMP:9625"/>
        <dbReference type="ChEBI" id="CHEBI:15378"/>
        <dbReference type="ChEBI" id="CHEBI:16526"/>
        <dbReference type="ChEBI" id="CHEBI:57287"/>
        <dbReference type="ChEBI" id="CHEBI:57288"/>
        <dbReference type="ChEBI" id="CHEBI:78449"/>
        <dbReference type="ChEBI" id="CHEBI:78450"/>
        <dbReference type="EC" id="2.3.1.180"/>
    </reaction>
</comment>
<comment type="pathway">
    <text evidence="1">Lipid metabolism; fatty acid biosynthesis.</text>
</comment>
<comment type="subunit">
    <text evidence="1">Homodimer.</text>
</comment>
<comment type="subcellular location">
    <subcellularLocation>
        <location evidence="1">Cytoplasm</location>
    </subcellularLocation>
</comment>
<comment type="domain">
    <text evidence="1">The last Arg residue of the ACP-binding site is essential for the weak association between ACP/AcpP and FabH.</text>
</comment>
<comment type="similarity">
    <text evidence="1">Belongs to the thiolase-like superfamily. FabH family.</text>
</comment>
<name>FABH_BAUCH</name>
<proteinExistence type="inferred from homology"/>
<accession>Q1LT37</accession>
<feature type="chain" id="PRO_1000056327" description="Beta-ketoacyl-[acyl-carrier-protein] synthase III">
    <location>
        <begin position="1"/>
        <end position="317"/>
    </location>
</feature>
<feature type="region of interest" description="ACP-binding" evidence="1">
    <location>
        <begin position="245"/>
        <end position="249"/>
    </location>
</feature>
<feature type="active site" evidence="1">
    <location>
        <position position="112"/>
    </location>
</feature>
<feature type="active site" evidence="1">
    <location>
        <position position="244"/>
    </location>
</feature>
<feature type="active site" evidence="1">
    <location>
        <position position="274"/>
    </location>
</feature>